<dbReference type="SMR" id="P83406"/>
<dbReference type="GO" id="GO:0005576">
    <property type="term" value="C:extracellular region"/>
    <property type="evidence" value="ECO:0000314"/>
    <property type="project" value="UniProtKB"/>
</dbReference>
<dbReference type="GO" id="GO:0005246">
    <property type="term" value="F:calcium channel regulator activity"/>
    <property type="evidence" value="ECO:0000314"/>
    <property type="project" value="UniProtKB"/>
</dbReference>
<dbReference type="GO" id="GO:0008200">
    <property type="term" value="F:ion channel inhibitor activity"/>
    <property type="evidence" value="ECO:0007669"/>
    <property type="project" value="InterPro"/>
</dbReference>
<dbReference type="GO" id="GO:0090729">
    <property type="term" value="F:toxin activity"/>
    <property type="evidence" value="ECO:0000314"/>
    <property type="project" value="UniProtKB"/>
</dbReference>
<dbReference type="GO" id="GO:0044472">
    <property type="term" value="P:envenomation resulting in modulation of calcium channel activity in another organism"/>
    <property type="evidence" value="ECO:0000314"/>
    <property type="project" value="UniProtKB"/>
</dbReference>
<dbReference type="InterPro" id="IPR036574">
    <property type="entry name" value="Scorpion_toxin-like_sf"/>
</dbReference>
<dbReference type="InterPro" id="IPR008911">
    <property type="entry name" value="Toxin_alpha-KTx_8/9"/>
</dbReference>
<dbReference type="Pfam" id="PF05453">
    <property type="entry name" value="Toxin_6"/>
    <property type="match status" value="1"/>
</dbReference>
<dbReference type="SUPFAM" id="SSF57095">
    <property type="entry name" value="Scorpion toxin-like"/>
    <property type="match status" value="1"/>
</dbReference>
<accession>P83406</accession>
<comment type="function">
    <text evidence="2">Calcium channel activator. Rapidly and reversibly activates ryanodine receptor 1 (RYR1).</text>
</comment>
<comment type="subcellular location">
    <subcellularLocation>
        <location evidence="2">Secreted</location>
    </subcellularLocation>
</comment>
<comment type="tissue specificity">
    <text evidence="5">Expressed by the venom gland.</text>
</comment>
<comment type="domain">
    <text evidence="1">Has the structural arrangement of an alpha-helix connected to a beta-sheet by disulfide bonds (CSalpha/beta).</text>
</comment>
<comment type="mass spectrometry"/>
<comment type="similarity">
    <text evidence="4">Belongs to the short scorpion toxin superfamily. Potassium channel inhibitor family. Alpha-KTx 09 subfamily.</text>
</comment>
<reference key="1">
    <citation type="journal article" date="2004" name="J. Biol. Chem.">
        <title>Activation of skeletal ryanodine receptors by two novel scorpion toxins from Buthotus judaicus.</title>
        <authorList>
            <person name="Zhu X."/>
            <person name="Zamudio F.Z."/>
            <person name="Olbinski B.A."/>
            <person name="Possani L.D."/>
            <person name="Valdivia H.H."/>
        </authorList>
    </citation>
    <scope>PROTEIN SEQUENCE</scope>
    <scope>FUNCTION</scope>
    <scope>SUBCELLULAR LOCATION</scope>
    <scope>MASS SPECTROMETRY</scope>
    <source>
        <tissue>Venom</tissue>
    </source>
</reference>
<proteinExistence type="evidence at protein level"/>
<protein>
    <recommendedName>
        <fullName evidence="4">Potassium channel toxin alpha-KTx 9.7</fullName>
    </recommendedName>
    <alternativeName>
        <fullName evidence="3">BjTx-2</fullName>
    </alternativeName>
</protein>
<sequence>VGCEECPAHCKGKNAIPTCDDGVCNCNV</sequence>
<feature type="peptide" id="PRO_0000044947" description="Potassium channel toxin alpha-KTx 9.7" evidence="2">
    <location>
        <begin position="1"/>
        <end position="28"/>
    </location>
</feature>
<feature type="disulfide bond" evidence="1">
    <location>
        <begin position="3"/>
        <end position="19"/>
    </location>
</feature>
<feature type="disulfide bond" evidence="1">
    <location>
        <begin position="6"/>
        <end position="24"/>
    </location>
</feature>
<feature type="disulfide bond" evidence="1">
    <location>
        <begin position="10"/>
        <end position="26"/>
    </location>
</feature>
<keyword id="KW-0108">Calcium channel impairing toxin</keyword>
<keyword id="KW-0903">Direct protein sequencing</keyword>
<keyword id="KW-1015">Disulfide bond</keyword>
<keyword id="KW-0872">Ion channel impairing toxin</keyword>
<keyword id="KW-0528">Neurotoxin</keyword>
<keyword id="KW-1219">Ryanodine-sensitive calcium-release channel impairing toxin</keyword>
<keyword id="KW-0964">Secreted</keyword>
<keyword id="KW-0800">Toxin</keyword>
<organism>
    <name type="scientific">Hottentotta judaicus</name>
    <name type="common">Black scorpion</name>
    <name type="synonym">Buthotus judaicus</name>
    <dbReference type="NCBI Taxonomy" id="6863"/>
    <lineage>
        <taxon>Eukaryota</taxon>
        <taxon>Metazoa</taxon>
        <taxon>Ecdysozoa</taxon>
        <taxon>Arthropoda</taxon>
        <taxon>Chelicerata</taxon>
        <taxon>Arachnida</taxon>
        <taxon>Scorpiones</taxon>
        <taxon>Buthida</taxon>
        <taxon>Buthoidea</taxon>
        <taxon>Buthidae</taxon>
        <taxon>Hottentotta</taxon>
    </lineage>
</organism>
<name>KAX97_HOTJU</name>
<evidence type="ECO:0000250" key="1">
    <source>
        <dbReference type="UniProtKB" id="Q9NJP7"/>
    </source>
</evidence>
<evidence type="ECO:0000269" key="2">
    <source>
    </source>
</evidence>
<evidence type="ECO:0000303" key="3">
    <source>
    </source>
</evidence>
<evidence type="ECO:0000305" key="4"/>
<evidence type="ECO:0000305" key="5">
    <source>
    </source>
</evidence>